<accession>A8YTF7</accession>
<keyword id="KW-0227">DNA damage</keyword>
<keyword id="KW-0233">DNA recombination</keyword>
<keyword id="KW-0234">DNA repair</keyword>
<keyword id="KW-0479">Metal-binding</keyword>
<keyword id="KW-0862">Zinc</keyword>
<keyword id="KW-0863">Zinc-finger</keyword>
<dbReference type="EMBL" id="CP000517">
    <property type="protein sequence ID" value="ABX26613.1"/>
    <property type="molecule type" value="Genomic_DNA"/>
</dbReference>
<dbReference type="RefSeq" id="WP_003631534.1">
    <property type="nucleotide sequence ID" value="NC_010080.1"/>
</dbReference>
<dbReference type="SMR" id="A8YTF7"/>
<dbReference type="KEGG" id="lhe:lhv_0402"/>
<dbReference type="eggNOG" id="COG0353">
    <property type="taxonomic scope" value="Bacteria"/>
</dbReference>
<dbReference type="HOGENOM" id="CLU_060739_1_0_9"/>
<dbReference type="Proteomes" id="UP000000790">
    <property type="component" value="Chromosome"/>
</dbReference>
<dbReference type="GO" id="GO:0003677">
    <property type="term" value="F:DNA binding"/>
    <property type="evidence" value="ECO:0007669"/>
    <property type="project" value="UniProtKB-UniRule"/>
</dbReference>
<dbReference type="GO" id="GO:0008270">
    <property type="term" value="F:zinc ion binding"/>
    <property type="evidence" value="ECO:0007669"/>
    <property type="project" value="UniProtKB-KW"/>
</dbReference>
<dbReference type="GO" id="GO:0006310">
    <property type="term" value="P:DNA recombination"/>
    <property type="evidence" value="ECO:0007669"/>
    <property type="project" value="UniProtKB-UniRule"/>
</dbReference>
<dbReference type="GO" id="GO:0006281">
    <property type="term" value="P:DNA repair"/>
    <property type="evidence" value="ECO:0007669"/>
    <property type="project" value="UniProtKB-UniRule"/>
</dbReference>
<dbReference type="CDD" id="cd01025">
    <property type="entry name" value="TOPRIM_recR"/>
    <property type="match status" value="1"/>
</dbReference>
<dbReference type="Gene3D" id="3.30.60.80">
    <property type="match status" value="1"/>
</dbReference>
<dbReference type="Gene3D" id="3.40.1360.10">
    <property type="match status" value="1"/>
</dbReference>
<dbReference type="Gene3D" id="6.10.250.240">
    <property type="match status" value="1"/>
</dbReference>
<dbReference type="Gene3D" id="1.10.8.420">
    <property type="entry name" value="RecR Domain 1"/>
    <property type="match status" value="1"/>
</dbReference>
<dbReference type="HAMAP" id="MF_00017">
    <property type="entry name" value="RecR"/>
    <property type="match status" value="1"/>
</dbReference>
<dbReference type="InterPro" id="IPR000093">
    <property type="entry name" value="DNA_Rcmb_RecR"/>
</dbReference>
<dbReference type="InterPro" id="IPR023627">
    <property type="entry name" value="Rcmb_RecR"/>
</dbReference>
<dbReference type="InterPro" id="IPR015967">
    <property type="entry name" value="Rcmb_RecR_Znf"/>
</dbReference>
<dbReference type="InterPro" id="IPR006171">
    <property type="entry name" value="TOPRIM_dom"/>
</dbReference>
<dbReference type="InterPro" id="IPR034137">
    <property type="entry name" value="TOPRIM_RecR"/>
</dbReference>
<dbReference type="NCBIfam" id="TIGR00615">
    <property type="entry name" value="recR"/>
    <property type="match status" value="1"/>
</dbReference>
<dbReference type="PANTHER" id="PTHR30446">
    <property type="entry name" value="RECOMBINATION PROTEIN RECR"/>
    <property type="match status" value="1"/>
</dbReference>
<dbReference type="PANTHER" id="PTHR30446:SF0">
    <property type="entry name" value="RECOMBINATION PROTEIN RECR"/>
    <property type="match status" value="1"/>
</dbReference>
<dbReference type="Pfam" id="PF21175">
    <property type="entry name" value="RecR_C"/>
    <property type="match status" value="1"/>
</dbReference>
<dbReference type="Pfam" id="PF21176">
    <property type="entry name" value="RecR_HhH"/>
    <property type="match status" value="1"/>
</dbReference>
<dbReference type="Pfam" id="PF02132">
    <property type="entry name" value="RecR_ZnF"/>
    <property type="match status" value="1"/>
</dbReference>
<dbReference type="Pfam" id="PF13662">
    <property type="entry name" value="Toprim_4"/>
    <property type="match status" value="1"/>
</dbReference>
<dbReference type="SMART" id="SM00493">
    <property type="entry name" value="TOPRIM"/>
    <property type="match status" value="1"/>
</dbReference>
<dbReference type="SUPFAM" id="SSF111304">
    <property type="entry name" value="Recombination protein RecR"/>
    <property type="match status" value="1"/>
</dbReference>
<dbReference type="PROSITE" id="PS01300">
    <property type="entry name" value="RECR"/>
    <property type="match status" value="1"/>
</dbReference>
<dbReference type="PROSITE" id="PS50880">
    <property type="entry name" value="TOPRIM"/>
    <property type="match status" value="1"/>
</dbReference>
<feature type="chain" id="PRO_1000070975" description="Recombination protein RecR">
    <location>
        <begin position="1"/>
        <end position="199"/>
    </location>
</feature>
<feature type="domain" description="Toprim" evidence="1">
    <location>
        <begin position="80"/>
        <end position="176"/>
    </location>
</feature>
<feature type="zinc finger region" description="C4-type" evidence="1">
    <location>
        <begin position="57"/>
        <end position="72"/>
    </location>
</feature>
<evidence type="ECO:0000255" key="1">
    <source>
        <dbReference type="HAMAP-Rule" id="MF_00017"/>
    </source>
</evidence>
<name>RECR_LACH4</name>
<gene>
    <name evidence="1" type="primary">recR</name>
    <name type="ordered locus">lhv_0402</name>
</gene>
<organism>
    <name type="scientific">Lactobacillus helveticus (strain DPC 4571)</name>
    <dbReference type="NCBI Taxonomy" id="405566"/>
    <lineage>
        <taxon>Bacteria</taxon>
        <taxon>Bacillati</taxon>
        <taxon>Bacillota</taxon>
        <taxon>Bacilli</taxon>
        <taxon>Lactobacillales</taxon>
        <taxon>Lactobacillaceae</taxon>
        <taxon>Lactobacillus</taxon>
    </lineage>
</organism>
<reference key="1">
    <citation type="journal article" date="2008" name="J. Bacteriol.">
        <title>Genome sequence of Lactobacillus helveticus: an organism distinguished by selective gene loss and IS element expansion.</title>
        <authorList>
            <person name="Callanan M."/>
            <person name="Kaleta P."/>
            <person name="O'Callaghan J."/>
            <person name="O'Sullivan O."/>
            <person name="Jordan K."/>
            <person name="McAuliffe O."/>
            <person name="Sangrador-Vegas A."/>
            <person name="Slattery L."/>
            <person name="Fitzgerald G.F."/>
            <person name="Beresford T."/>
            <person name="Ross R.P."/>
        </authorList>
    </citation>
    <scope>NUCLEOTIDE SEQUENCE [LARGE SCALE GENOMIC DNA]</scope>
    <source>
        <strain>DPC 4571</strain>
    </source>
</reference>
<protein>
    <recommendedName>
        <fullName evidence="1">Recombination protein RecR</fullName>
    </recommendedName>
</protein>
<proteinExistence type="inferred from homology"/>
<sequence length="199" mass="22069">MQYPLPIAHLIDAYMRLPGVGEKTATRLAFYTMDMPEKDVEDFSKALIQVKNDIHQCPICGNITEKEVCDICSNPNRDQTTIMVVEQPKDLMAFEEMGEYDGLYHVLHGVLSPMDGIGPEEINIKSLITRLQKNDDVKEVILALNSTPEGESTAMYISKLIKPAEIKVTRLAAGLSVGSDIEYANSITLKRAVQGRTAL</sequence>
<comment type="function">
    <text evidence="1">May play a role in DNA repair. It seems to be involved in an RecBC-independent recombinational process of DNA repair. It may act with RecF and RecO.</text>
</comment>
<comment type="similarity">
    <text evidence="1">Belongs to the RecR family.</text>
</comment>